<reference key="1">
    <citation type="submission" date="2008-02" db="EMBL/GenBank/DDBJ databases">
        <title>Complete sequence of chromosome 1 of Burkholderia cenocepacia MC0-3.</title>
        <authorList>
            <person name="Copeland A."/>
            <person name="Lucas S."/>
            <person name="Lapidus A."/>
            <person name="Barry K."/>
            <person name="Bruce D."/>
            <person name="Goodwin L."/>
            <person name="Glavina del Rio T."/>
            <person name="Dalin E."/>
            <person name="Tice H."/>
            <person name="Pitluck S."/>
            <person name="Chain P."/>
            <person name="Malfatti S."/>
            <person name="Shin M."/>
            <person name="Vergez L."/>
            <person name="Schmutz J."/>
            <person name="Larimer F."/>
            <person name="Land M."/>
            <person name="Hauser L."/>
            <person name="Kyrpides N."/>
            <person name="Mikhailova N."/>
            <person name="Tiedje J."/>
            <person name="Richardson P."/>
        </authorList>
    </citation>
    <scope>NUCLEOTIDE SEQUENCE [LARGE SCALE GENOMIC DNA]</scope>
    <source>
        <strain>MC0-3</strain>
    </source>
</reference>
<keyword id="KW-0687">Ribonucleoprotein</keyword>
<keyword id="KW-0689">Ribosomal protein</keyword>
<keyword id="KW-0694">RNA-binding</keyword>
<keyword id="KW-0699">rRNA-binding</keyword>
<protein>
    <recommendedName>
        <fullName evidence="1">Large ribosomal subunit protein uL14</fullName>
    </recommendedName>
    <alternativeName>
        <fullName evidence="2">50S ribosomal protein L14</fullName>
    </alternativeName>
</protein>
<evidence type="ECO:0000255" key="1">
    <source>
        <dbReference type="HAMAP-Rule" id="MF_01367"/>
    </source>
</evidence>
<evidence type="ECO:0000305" key="2"/>
<comment type="function">
    <text evidence="1">Binds to 23S rRNA. Forms part of two intersubunit bridges in the 70S ribosome.</text>
</comment>
<comment type="subunit">
    <text evidence="1">Part of the 50S ribosomal subunit. Forms a cluster with proteins L3 and L19. In the 70S ribosome, L14 and L19 interact and together make contacts with the 16S rRNA in bridges B5 and B8.</text>
</comment>
<comment type="similarity">
    <text evidence="1">Belongs to the universal ribosomal protein uL14 family.</text>
</comment>
<sequence>MIQTESRLEVADNTGAREVLCIKVLGGSKRRYAGIGDIIKVSVKEATPRGRVKKGEIYNAVVVRTAKGVRRQDGSLIKFDGNAAVLLNNKLEPIGTRIFGPVTRELRSERFMKIVSLAPEVL</sequence>
<gene>
    <name evidence="1" type="primary">rplN</name>
    <name type="ordered locus">Bcenmc03_0337</name>
</gene>
<organism>
    <name type="scientific">Burkholderia orbicola (strain MC0-3)</name>
    <dbReference type="NCBI Taxonomy" id="406425"/>
    <lineage>
        <taxon>Bacteria</taxon>
        <taxon>Pseudomonadati</taxon>
        <taxon>Pseudomonadota</taxon>
        <taxon>Betaproteobacteria</taxon>
        <taxon>Burkholderiales</taxon>
        <taxon>Burkholderiaceae</taxon>
        <taxon>Burkholderia</taxon>
        <taxon>Burkholderia cepacia complex</taxon>
        <taxon>Burkholderia orbicola</taxon>
    </lineage>
</organism>
<feature type="chain" id="PRO_1000144233" description="Large ribosomal subunit protein uL14">
    <location>
        <begin position="1"/>
        <end position="122"/>
    </location>
</feature>
<accession>B1JU32</accession>
<dbReference type="EMBL" id="CP000958">
    <property type="protein sequence ID" value="ACA89517.1"/>
    <property type="molecule type" value="Genomic_DNA"/>
</dbReference>
<dbReference type="RefSeq" id="WP_006482918.1">
    <property type="nucleotide sequence ID" value="NC_010508.1"/>
</dbReference>
<dbReference type="SMR" id="B1JU32"/>
<dbReference type="GeneID" id="93193441"/>
<dbReference type="KEGG" id="bcm:Bcenmc03_0337"/>
<dbReference type="HOGENOM" id="CLU_095071_2_1_4"/>
<dbReference type="Proteomes" id="UP000002169">
    <property type="component" value="Chromosome 1"/>
</dbReference>
<dbReference type="GO" id="GO:0022625">
    <property type="term" value="C:cytosolic large ribosomal subunit"/>
    <property type="evidence" value="ECO:0007669"/>
    <property type="project" value="TreeGrafter"/>
</dbReference>
<dbReference type="GO" id="GO:0070180">
    <property type="term" value="F:large ribosomal subunit rRNA binding"/>
    <property type="evidence" value="ECO:0007669"/>
    <property type="project" value="TreeGrafter"/>
</dbReference>
<dbReference type="GO" id="GO:0003735">
    <property type="term" value="F:structural constituent of ribosome"/>
    <property type="evidence" value="ECO:0007669"/>
    <property type="project" value="InterPro"/>
</dbReference>
<dbReference type="GO" id="GO:0006412">
    <property type="term" value="P:translation"/>
    <property type="evidence" value="ECO:0007669"/>
    <property type="project" value="UniProtKB-UniRule"/>
</dbReference>
<dbReference type="CDD" id="cd00337">
    <property type="entry name" value="Ribosomal_uL14"/>
    <property type="match status" value="1"/>
</dbReference>
<dbReference type="FunFam" id="2.40.150.20:FF:000001">
    <property type="entry name" value="50S ribosomal protein L14"/>
    <property type="match status" value="1"/>
</dbReference>
<dbReference type="Gene3D" id="2.40.150.20">
    <property type="entry name" value="Ribosomal protein L14"/>
    <property type="match status" value="1"/>
</dbReference>
<dbReference type="HAMAP" id="MF_01367">
    <property type="entry name" value="Ribosomal_uL14"/>
    <property type="match status" value="1"/>
</dbReference>
<dbReference type="InterPro" id="IPR000218">
    <property type="entry name" value="Ribosomal_uL14"/>
</dbReference>
<dbReference type="InterPro" id="IPR005745">
    <property type="entry name" value="Ribosomal_uL14_bac-type"/>
</dbReference>
<dbReference type="InterPro" id="IPR019972">
    <property type="entry name" value="Ribosomal_uL14_CS"/>
</dbReference>
<dbReference type="InterPro" id="IPR036853">
    <property type="entry name" value="Ribosomal_uL14_sf"/>
</dbReference>
<dbReference type="NCBIfam" id="TIGR01067">
    <property type="entry name" value="rplN_bact"/>
    <property type="match status" value="1"/>
</dbReference>
<dbReference type="PANTHER" id="PTHR11761">
    <property type="entry name" value="50S/60S RIBOSOMAL PROTEIN L14/L23"/>
    <property type="match status" value="1"/>
</dbReference>
<dbReference type="PANTHER" id="PTHR11761:SF3">
    <property type="entry name" value="LARGE RIBOSOMAL SUBUNIT PROTEIN UL14M"/>
    <property type="match status" value="1"/>
</dbReference>
<dbReference type="Pfam" id="PF00238">
    <property type="entry name" value="Ribosomal_L14"/>
    <property type="match status" value="1"/>
</dbReference>
<dbReference type="SMART" id="SM01374">
    <property type="entry name" value="Ribosomal_L14"/>
    <property type="match status" value="1"/>
</dbReference>
<dbReference type="SUPFAM" id="SSF50193">
    <property type="entry name" value="Ribosomal protein L14"/>
    <property type="match status" value="1"/>
</dbReference>
<dbReference type="PROSITE" id="PS00049">
    <property type="entry name" value="RIBOSOMAL_L14"/>
    <property type="match status" value="1"/>
</dbReference>
<name>RL14_BURO0</name>
<proteinExistence type="inferred from homology"/>